<proteinExistence type="evidence at transcript level"/>
<gene>
    <name type="primary">endouc</name>
    <name type="ORF">si:dkey-103i16.2</name>
</gene>
<sequence>MASGYDFGWIPVLLSLFTLTDASSQTVNQELSNIFNELWKLDVNRMEPLTNYNISLQGKAGYIPQGSTNVVDHASSPLFVNVDEAKLSSITTYARFMKLLDNYERSTGVAERVTAEEVTENNSFLDAILETAVMKRAHQYLIGKGKSRSDLRQFKSQLYYMWFRLYHRERNGGEDSSGFEHVFVGETKFGREIMGLHNWVQFYLQEKQNLLDYKGYKARANDVPDADDHVLNVQFSWHGLVKPVASAFVGVSPEFEMAVFTILFLTSTEKTTTAVVNLDEYQLEMVVHRHGRCIGTAYPKLLSSNNRHM</sequence>
<accession>Q1LUM3</accession>
<accession>A3KNG8</accession>
<accession>B0S8H8</accession>
<organism>
    <name type="scientific">Danio rerio</name>
    <name type="common">Zebrafish</name>
    <name type="synonym">Brachydanio rerio</name>
    <dbReference type="NCBI Taxonomy" id="7955"/>
    <lineage>
        <taxon>Eukaryota</taxon>
        <taxon>Metazoa</taxon>
        <taxon>Chordata</taxon>
        <taxon>Craniata</taxon>
        <taxon>Vertebrata</taxon>
        <taxon>Euteleostomi</taxon>
        <taxon>Actinopterygii</taxon>
        <taxon>Neopterygii</taxon>
        <taxon>Teleostei</taxon>
        <taxon>Ostariophysi</taxon>
        <taxon>Cypriniformes</taxon>
        <taxon>Danionidae</taxon>
        <taxon>Danioninae</taxon>
        <taxon>Danio</taxon>
    </lineage>
</organism>
<evidence type="ECO:0000250" key="1"/>
<evidence type="ECO:0000250" key="2">
    <source>
        <dbReference type="UniProtKB" id="P21128"/>
    </source>
</evidence>
<evidence type="ECO:0000255" key="3"/>
<evidence type="ECO:0000255" key="4">
    <source>
        <dbReference type="PROSITE-ProRule" id="PRU01304"/>
    </source>
</evidence>
<evidence type="ECO:0000305" key="5"/>
<name>ENDUC_DANRE</name>
<keyword id="KW-0255">Endonuclease</keyword>
<keyword id="KW-0325">Glycoprotein</keyword>
<keyword id="KW-0378">Hydrolase</keyword>
<keyword id="KW-0456">Lyase</keyword>
<keyword id="KW-0464">Manganese</keyword>
<keyword id="KW-0479">Metal-binding</keyword>
<keyword id="KW-0540">Nuclease</keyword>
<keyword id="KW-1185">Reference proteome</keyword>
<keyword id="KW-0694">RNA-binding</keyword>
<keyword id="KW-0964">Secreted</keyword>
<keyword id="KW-0732">Signal</keyword>
<comment type="function">
    <text evidence="2">Endoribonuclease that cleaves single-stranded RNAs at 5' of uridylates and releases a product with a 2',3'-cyclic phosphate at the 3'-end. The UU and GU sites are more efficiently cleaved than CU and AU sites.</text>
</comment>
<comment type="catalytic activity">
    <reaction evidence="2">
        <text>ribonucleotidyl-uridine-RNA = a 5'-end dephospho-uridine-RNA + a 3'-end 2',3'-cyclophospho-ribonucleotide-RNA</text>
        <dbReference type="Rhea" id="RHEA:67792"/>
        <dbReference type="Rhea" id="RHEA-COMP:10464"/>
        <dbReference type="Rhea" id="RHEA-COMP:17354"/>
        <dbReference type="Rhea" id="RHEA-COMP:17356"/>
        <dbReference type="ChEBI" id="CHEBI:83064"/>
        <dbReference type="ChEBI" id="CHEBI:173117"/>
        <dbReference type="ChEBI" id="CHEBI:173224"/>
    </reaction>
    <physiologicalReaction direction="left-to-right" evidence="2">
        <dbReference type="Rhea" id="RHEA:67793"/>
    </physiologicalReaction>
</comment>
<comment type="cofactor">
    <cofactor evidence="1">
        <name>Mn(2+)</name>
        <dbReference type="ChEBI" id="CHEBI:29035"/>
    </cofactor>
</comment>
<comment type="subunit">
    <text evidence="1">Monomer.</text>
</comment>
<comment type="subcellular location">
    <subcellularLocation>
        <location evidence="5">Secreted</location>
    </subcellularLocation>
</comment>
<comment type="similarity">
    <text evidence="5">Belongs to the ENDOU family.</text>
</comment>
<comment type="sequence caution" evidence="5">
    <conflict type="erroneous gene model prediction">
        <sequence resource="EMBL-CDS" id="CAQ14751"/>
    </conflict>
</comment>
<dbReference type="EC" id="4.6.1.-" evidence="2"/>
<dbReference type="EMBL" id="BX928740">
    <property type="protein sequence ID" value="CAK04736.1"/>
    <property type="molecule type" value="Genomic_DNA"/>
</dbReference>
<dbReference type="EMBL" id="BX928740">
    <property type="protein sequence ID" value="CAQ14751.1"/>
    <property type="status" value="ALT_SEQ"/>
    <property type="molecule type" value="Genomic_DNA"/>
</dbReference>
<dbReference type="EMBL" id="BC133830">
    <property type="protein sequence ID" value="AAI33831.1"/>
    <property type="molecule type" value="mRNA"/>
</dbReference>
<dbReference type="RefSeq" id="NP_001038439.1">
    <property type="nucleotide sequence ID" value="NM_001044974.1"/>
</dbReference>
<dbReference type="SMR" id="Q1LUM3"/>
<dbReference type="FunCoup" id="Q1LUM3">
    <property type="interactions" value="3"/>
</dbReference>
<dbReference type="STRING" id="7955.ENSDARP00000154618"/>
<dbReference type="GlyCosmos" id="Q1LUM3">
    <property type="glycosylation" value="2 sites, No reported glycans"/>
</dbReference>
<dbReference type="PaxDb" id="7955-ENSDARP00000099395"/>
<dbReference type="Ensembl" id="ENSDART00000180090">
    <property type="protein sequence ID" value="ENSDARP00000154126"/>
    <property type="gene ID" value="ENSDARG00000109519"/>
</dbReference>
<dbReference type="Ensembl" id="ENSDART00000187847">
    <property type="protein sequence ID" value="ENSDARP00000154618"/>
    <property type="gene ID" value="ENSDARG00000112234"/>
</dbReference>
<dbReference type="Ensembl" id="ENSDART00000189777">
    <property type="protein sequence ID" value="ENSDARP00000148981"/>
    <property type="gene ID" value="ENSDARG00000110065"/>
</dbReference>
<dbReference type="GeneID" id="562040"/>
<dbReference type="KEGG" id="dre:562040"/>
<dbReference type="AGR" id="ZFIN:ZDB-GENE-060503-141"/>
<dbReference type="CTD" id="562040"/>
<dbReference type="ZFIN" id="ZDB-GENE-060503-141">
    <property type="gene designation" value="endouc"/>
</dbReference>
<dbReference type="eggNOG" id="KOG2849">
    <property type="taxonomic scope" value="Eukaryota"/>
</dbReference>
<dbReference type="HOGENOM" id="CLU_048034_1_0_1"/>
<dbReference type="InParanoid" id="Q1LUM3"/>
<dbReference type="OMA" id="CGMSLWP"/>
<dbReference type="OrthoDB" id="430326at2759"/>
<dbReference type="PhylomeDB" id="Q1LUM3"/>
<dbReference type="TreeFam" id="TF319848"/>
<dbReference type="PRO" id="PR:Q1LUM3"/>
<dbReference type="Proteomes" id="UP000000437">
    <property type="component" value="Alternate scaffold 18"/>
</dbReference>
<dbReference type="Proteomes" id="UP000000437">
    <property type="component" value="Chromosome 18"/>
</dbReference>
<dbReference type="Bgee" id="ENSDARG00000112234">
    <property type="expression patterns" value="Expressed in zone of skin and 31 other cell types or tissues"/>
</dbReference>
<dbReference type="GO" id="GO:0005576">
    <property type="term" value="C:extracellular region"/>
    <property type="evidence" value="ECO:0007669"/>
    <property type="project" value="UniProtKB-SubCell"/>
</dbReference>
<dbReference type="GO" id="GO:0016829">
    <property type="term" value="F:lyase activity"/>
    <property type="evidence" value="ECO:0007669"/>
    <property type="project" value="UniProtKB-KW"/>
</dbReference>
<dbReference type="GO" id="GO:0046872">
    <property type="term" value="F:metal ion binding"/>
    <property type="evidence" value="ECO:0007669"/>
    <property type="project" value="UniProtKB-KW"/>
</dbReference>
<dbReference type="GO" id="GO:0003723">
    <property type="term" value="F:RNA binding"/>
    <property type="evidence" value="ECO:0000250"/>
    <property type="project" value="UniProtKB"/>
</dbReference>
<dbReference type="GO" id="GO:0004521">
    <property type="term" value="F:RNA endonuclease activity"/>
    <property type="evidence" value="ECO:0000250"/>
    <property type="project" value="UniProtKB"/>
</dbReference>
<dbReference type="CDD" id="cd21159">
    <property type="entry name" value="XendoU"/>
    <property type="match status" value="1"/>
</dbReference>
<dbReference type="InterPro" id="IPR039787">
    <property type="entry name" value="ENDOU"/>
</dbReference>
<dbReference type="InterPro" id="IPR037227">
    <property type="entry name" value="EndoU-like"/>
</dbReference>
<dbReference type="InterPro" id="IPR018998">
    <property type="entry name" value="EndoU_C"/>
</dbReference>
<dbReference type="PANTHER" id="PTHR12439">
    <property type="entry name" value="PLACENTAL PROTEIN 11-RELATED"/>
    <property type="match status" value="1"/>
</dbReference>
<dbReference type="PANTHER" id="PTHR12439:SF13">
    <property type="entry name" value="URIDYLATE-SPECIFIC ENDORIBONUCLEASE C"/>
    <property type="match status" value="1"/>
</dbReference>
<dbReference type="Pfam" id="PF09412">
    <property type="entry name" value="XendoU"/>
    <property type="match status" value="1"/>
</dbReference>
<dbReference type="SUPFAM" id="SSF142877">
    <property type="entry name" value="EndoU-like"/>
    <property type="match status" value="1"/>
</dbReference>
<dbReference type="PROSITE" id="PS51959">
    <property type="entry name" value="ENDOU"/>
    <property type="match status" value="1"/>
</dbReference>
<reference key="1">
    <citation type="journal article" date="2013" name="Nature">
        <title>The zebrafish reference genome sequence and its relationship to the human genome.</title>
        <authorList>
            <person name="Howe K."/>
            <person name="Clark M.D."/>
            <person name="Torroja C.F."/>
            <person name="Torrance J."/>
            <person name="Berthelot C."/>
            <person name="Muffato M."/>
            <person name="Collins J.E."/>
            <person name="Humphray S."/>
            <person name="McLaren K."/>
            <person name="Matthews L."/>
            <person name="McLaren S."/>
            <person name="Sealy I."/>
            <person name="Caccamo M."/>
            <person name="Churcher C."/>
            <person name="Scott C."/>
            <person name="Barrett J.C."/>
            <person name="Koch R."/>
            <person name="Rauch G.J."/>
            <person name="White S."/>
            <person name="Chow W."/>
            <person name="Kilian B."/>
            <person name="Quintais L.T."/>
            <person name="Guerra-Assuncao J.A."/>
            <person name="Zhou Y."/>
            <person name="Gu Y."/>
            <person name="Yen J."/>
            <person name="Vogel J.H."/>
            <person name="Eyre T."/>
            <person name="Redmond S."/>
            <person name="Banerjee R."/>
            <person name="Chi J."/>
            <person name="Fu B."/>
            <person name="Langley E."/>
            <person name="Maguire S.F."/>
            <person name="Laird G.K."/>
            <person name="Lloyd D."/>
            <person name="Kenyon E."/>
            <person name="Donaldson S."/>
            <person name="Sehra H."/>
            <person name="Almeida-King J."/>
            <person name="Loveland J."/>
            <person name="Trevanion S."/>
            <person name="Jones M."/>
            <person name="Quail M."/>
            <person name="Willey D."/>
            <person name="Hunt A."/>
            <person name="Burton J."/>
            <person name="Sims S."/>
            <person name="McLay K."/>
            <person name="Plumb B."/>
            <person name="Davis J."/>
            <person name="Clee C."/>
            <person name="Oliver K."/>
            <person name="Clark R."/>
            <person name="Riddle C."/>
            <person name="Elliot D."/>
            <person name="Threadgold G."/>
            <person name="Harden G."/>
            <person name="Ware D."/>
            <person name="Begum S."/>
            <person name="Mortimore B."/>
            <person name="Kerry G."/>
            <person name="Heath P."/>
            <person name="Phillimore B."/>
            <person name="Tracey A."/>
            <person name="Corby N."/>
            <person name="Dunn M."/>
            <person name="Johnson C."/>
            <person name="Wood J."/>
            <person name="Clark S."/>
            <person name="Pelan S."/>
            <person name="Griffiths G."/>
            <person name="Smith M."/>
            <person name="Glithero R."/>
            <person name="Howden P."/>
            <person name="Barker N."/>
            <person name="Lloyd C."/>
            <person name="Stevens C."/>
            <person name="Harley J."/>
            <person name="Holt K."/>
            <person name="Panagiotidis G."/>
            <person name="Lovell J."/>
            <person name="Beasley H."/>
            <person name="Henderson C."/>
            <person name="Gordon D."/>
            <person name="Auger K."/>
            <person name="Wright D."/>
            <person name="Collins J."/>
            <person name="Raisen C."/>
            <person name="Dyer L."/>
            <person name="Leung K."/>
            <person name="Robertson L."/>
            <person name="Ambridge K."/>
            <person name="Leongamornlert D."/>
            <person name="McGuire S."/>
            <person name="Gilderthorp R."/>
            <person name="Griffiths C."/>
            <person name="Manthravadi D."/>
            <person name="Nichol S."/>
            <person name="Barker G."/>
            <person name="Whitehead S."/>
            <person name="Kay M."/>
            <person name="Brown J."/>
            <person name="Murnane C."/>
            <person name="Gray E."/>
            <person name="Humphries M."/>
            <person name="Sycamore N."/>
            <person name="Barker D."/>
            <person name="Saunders D."/>
            <person name="Wallis J."/>
            <person name="Babbage A."/>
            <person name="Hammond S."/>
            <person name="Mashreghi-Mohammadi M."/>
            <person name="Barr L."/>
            <person name="Martin S."/>
            <person name="Wray P."/>
            <person name="Ellington A."/>
            <person name="Matthews N."/>
            <person name="Ellwood M."/>
            <person name="Woodmansey R."/>
            <person name="Clark G."/>
            <person name="Cooper J."/>
            <person name="Tromans A."/>
            <person name="Grafham D."/>
            <person name="Skuce C."/>
            <person name="Pandian R."/>
            <person name="Andrews R."/>
            <person name="Harrison E."/>
            <person name="Kimberley A."/>
            <person name="Garnett J."/>
            <person name="Fosker N."/>
            <person name="Hall R."/>
            <person name="Garner P."/>
            <person name="Kelly D."/>
            <person name="Bird C."/>
            <person name="Palmer S."/>
            <person name="Gehring I."/>
            <person name="Berger A."/>
            <person name="Dooley C.M."/>
            <person name="Ersan-Urun Z."/>
            <person name="Eser C."/>
            <person name="Geiger H."/>
            <person name="Geisler M."/>
            <person name="Karotki L."/>
            <person name="Kirn A."/>
            <person name="Konantz J."/>
            <person name="Konantz M."/>
            <person name="Oberlander M."/>
            <person name="Rudolph-Geiger S."/>
            <person name="Teucke M."/>
            <person name="Lanz C."/>
            <person name="Raddatz G."/>
            <person name="Osoegawa K."/>
            <person name="Zhu B."/>
            <person name="Rapp A."/>
            <person name="Widaa S."/>
            <person name="Langford C."/>
            <person name="Yang F."/>
            <person name="Schuster S.C."/>
            <person name="Carter N.P."/>
            <person name="Harrow J."/>
            <person name="Ning Z."/>
            <person name="Herrero J."/>
            <person name="Searle S.M."/>
            <person name="Enright A."/>
            <person name="Geisler R."/>
            <person name="Plasterk R.H."/>
            <person name="Lee C."/>
            <person name="Westerfield M."/>
            <person name="de Jong P.J."/>
            <person name="Zon L.I."/>
            <person name="Postlethwait J.H."/>
            <person name="Nusslein-Volhard C."/>
            <person name="Hubbard T.J."/>
            <person name="Roest Crollius H."/>
            <person name="Rogers J."/>
            <person name="Stemple D.L."/>
        </authorList>
    </citation>
    <scope>NUCLEOTIDE SEQUENCE [LARGE SCALE GENOMIC DNA]</scope>
    <source>
        <strain>Tuebingen</strain>
    </source>
</reference>
<reference key="2">
    <citation type="submission" date="2007-03" db="EMBL/GenBank/DDBJ databases">
        <authorList>
            <consortium name="NIH - Zebrafish Gene Collection (ZGC) project"/>
        </authorList>
    </citation>
    <scope>NUCLEOTIDE SEQUENCE [LARGE SCALE MRNA]</scope>
</reference>
<protein>
    <recommendedName>
        <fullName evidence="5">Uridylate-specific endoribonuclease C</fullName>
        <ecNumber evidence="2">4.6.1.-</ecNumber>
    </recommendedName>
    <alternativeName>
        <fullName>Protein endoU-C</fullName>
    </alternativeName>
</protein>
<feature type="signal peptide" evidence="3">
    <location>
        <begin position="1"/>
        <end position="22"/>
    </location>
</feature>
<feature type="chain" id="PRO_0000394225" description="Uridylate-specific endoribonuclease C">
    <location>
        <begin position="23"/>
        <end position="309"/>
    </location>
</feature>
<feature type="domain" description="EndoU" evidence="4">
    <location>
        <begin position="27"/>
        <end position="303"/>
    </location>
</feature>
<feature type="active site" evidence="4">
    <location>
        <position position="181"/>
    </location>
</feature>
<feature type="active site" evidence="4">
    <location>
        <position position="197"/>
    </location>
</feature>
<feature type="active site" evidence="4">
    <location>
        <position position="242"/>
    </location>
</feature>
<feature type="glycosylation site" description="N-linked (GlcNAc...) asparagine" evidence="3">
    <location>
        <position position="53"/>
    </location>
</feature>
<feature type="glycosylation site" description="N-linked (GlcNAc...) asparagine" evidence="3">
    <location>
        <position position="121"/>
    </location>
</feature>
<feature type="sequence conflict" description="In Ref. 2; AAI33831." evidence="5" ref="2">
    <original>S</original>
    <variation>R</variation>
    <location>
        <position position="3"/>
    </location>
</feature>